<accession>Q2V3K9</accession>
<protein>
    <recommendedName>
        <fullName>Putative defensin-like protein 312</fullName>
    </recommendedName>
</protein>
<organism>
    <name type="scientific">Arabidopsis thaliana</name>
    <name type="common">Mouse-ear cress</name>
    <dbReference type="NCBI Taxonomy" id="3702"/>
    <lineage>
        <taxon>Eukaryota</taxon>
        <taxon>Viridiplantae</taxon>
        <taxon>Streptophyta</taxon>
        <taxon>Embryophyta</taxon>
        <taxon>Tracheophyta</taxon>
        <taxon>Spermatophyta</taxon>
        <taxon>Magnoliopsida</taxon>
        <taxon>eudicotyledons</taxon>
        <taxon>Gunneridae</taxon>
        <taxon>Pentapetalae</taxon>
        <taxon>rosids</taxon>
        <taxon>malvids</taxon>
        <taxon>Brassicales</taxon>
        <taxon>Brassicaceae</taxon>
        <taxon>Camelineae</taxon>
        <taxon>Arabidopsis</taxon>
    </lineage>
</organism>
<reference key="1">
    <citation type="journal article" date="1999" name="Nature">
        <title>Sequence and analysis of chromosome 4 of the plant Arabidopsis thaliana.</title>
        <authorList>
            <person name="Mayer K.F.X."/>
            <person name="Schueller C."/>
            <person name="Wambutt R."/>
            <person name="Murphy G."/>
            <person name="Volckaert G."/>
            <person name="Pohl T."/>
            <person name="Duesterhoeft A."/>
            <person name="Stiekema W."/>
            <person name="Entian K.-D."/>
            <person name="Terryn N."/>
            <person name="Harris B."/>
            <person name="Ansorge W."/>
            <person name="Brandt P."/>
            <person name="Grivell L.A."/>
            <person name="Rieger M."/>
            <person name="Weichselgartner M."/>
            <person name="de Simone V."/>
            <person name="Obermaier B."/>
            <person name="Mache R."/>
            <person name="Mueller M."/>
            <person name="Kreis M."/>
            <person name="Delseny M."/>
            <person name="Puigdomenech P."/>
            <person name="Watson M."/>
            <person name="Schmidtheini T."/>
            <person name="Reichert B."/>
            <person name="Portetelle D."/>
            <person name="Perez-Alonso M."/>
            <person name="Boutry M."/>
            <person name="Bancroft I."/>
            <person name="Vos P."/>
            <person name="Hoheisel J."/>
            <person name="Zimmermann W."/>
            <person name="Wedler H."/>
            <person name="Ridley P."/>
            <person name="Langham S.-A."/>
            <person name="McCullagh B."/>
            <person name="Bilham L."/>
            <person name="Robben J."/>
            <person name="van der Schueren J."/>
            <person name="Grymonprez B."/>
            <person name="Chuang Y.-J."/>
            <person name="Vandenbussche F."/>
            <person name="Braeken M."/>
            <person name="Weltjens I."/>
            <person name="Voet M."/>
            <person name="Bastiaens I."/>
            <person name="Aert R."/>
            <person name="Defoor E."/>
            <person name="Weitzenegger T."/>
            <person name="Bothe G."/>
            <person name="Ramsperger U."/>
            <person name="Hilbert H."/>
            <person name="Braun M."/>
            <person name="Holzer E."/>
            <person name="Brandt A."/>
            <person name="Peters S."/>
            <person name="van Staveren M."/>
            <person name="Dirkse W."/>
            <person name="Mooijman P."/>
            <person name="Klein Lankhorst R."/>
            <person name="Rose M."/>
            <person name="Hauf J."/>
            <person name="Koetter P."/>
            <person name="Berneiser S."/>
            <person name="Hempel S."/>
            <person name="Feldpausch M."/>
            <person name="Lamberth S."/>
            <person name="Van den Daele H."/>
            <person name="De Keyser A."/>
            <person name="Buysshaert C."/>
            <person name="Gielen J."/>
            <person name="Villarroel R."/>
            <person name="De Clercq R."/>
            <person name="van Montagu M."/>
            <person name="Rogers J."/>
            <person name="Cronin A."/>
            <person name="Quail M.A."/>
            <person name="Bray-Allen S."/>
            <person name="Clark L."/>
            <person name="Doggett J."/>
            <person name="Hall S."/>
            <person name="Kay M."/>
            <person name="Lennard N."/>
            <person name="McLay K."/>
            <person name="Mayes R."/>
            <person name="Pettett A."/>
            <person name="Rajandream M.A."/>
            <person name="Lyne M."/>
            <person name="Benes V."/>
            <person name="Rechmann S."/>
            <person name="Borkova D."/>
            <person name="Bloecker H."/>
            <person name="Scharfe M."/>
            <person name="Grimm M."/>
            <person name="Loehnert T.-H."/>
            <person name="Dose S."/>
            <person name="de Haan M."/>
            <person name="Maarse A.C."/>
            <person name="Schaefer M."/>
            <person name="Mueller-Auer S."/>
            <person name="Gabel C."/>
            <person name="Fuchs M."/>
            <person name="Fartmann B."/>
            <person name="Granderath K."/>
            <person name="Dauner D."/>
            <person name="Herzl A."/>
            <person name="Neumann S."/>
            <person name="Argiriou A."/>
            <person name="Vitale D."/>
            <person name="Liguori R."/>
            <person name="Piravandi E."/>
            <person name="Massenet O."/>
            <person name="Quigley F."/>
            <person name="Clabauld G."/>
            <person name="Muendlein A."/>
            <person name="Felber R."/>
            <person name="Schnabl S."/>
            <person name="Hiller R."/>
            <person name="Schmidt W."/>
            <person name="Lecharny A."/>
            <person name="Aubourg S."/>
            <person name="Chefdor F."/>
            <person name="Cooke R."/>
            <person name="Berger C."/>
            <person name="Monfort A."/>
            <person name="Casacuberta E."/>
            <person name="Gibbons T."/>
            <person name="Weber N."/>
            <person name="Vandenbol M."/>
            <person name="Bargues M."/>
            <person name="Terol J."/>
            <person name="Torres A."/>
            <person name="Perez-Perez A."/>
            <person name="Purnelle B."/>
            <person name="Bent E."/>
            <person name="Johnson S."/>
            <person name="Tacon D."/>
            <person name="Jesse T."/>
            <person name="Heijnen L."/>
            <person name="Schwarz S."/>
            <person name="Scholler P."/>
            <person name="Heber S."/>
            <person name="Francs P."/>
            <person name="Bielke C."/>
            <person name="Frishman D."/>
            <person name="Haase D."/>
            <person name="Lemcke K."/>
            <person name="Mewes H.-W."/>
            <person name="Stocker S."/>
            <person name="Zaccaria P."/>
            <person name="Bevan M."/>
            <person name="Wilson R.K."/>
            <person name="de la Bastide M."/>
            <person name="Habermann K."/>
            <person name="Parnell L."/>
            <person name="Dedhia N."/>
            <person name="Gnoj L."/>
            <person name="Schutz K."/>
            <person name="Huang E."/>
            <person name="Spiegel L."/>
            <person name="Sekhon M."/>
            <person name="Murray J."/>
            <person name="Sheet P."/>
            <person name="Cordes M."/>
            <person name="Abu-Threideh J."/>
            <person name="Stoneking T."/>
            <person name="Kalicki J."/>
            <person name="Graves T."/>
            <person name="Harmon G."/>
            <person name="Edwards J."/>
            <person name="Latreille P."/>
            <person name="Courtney L."/>
            <person name="Cloud J."/>
            <person name="Abbott A."/>
            <person name="Scott K."/>
            <person name="Johnson D."/>
            <person name="Minx P."/>
            <person name="Bentley D."/>
            <person name="Fulton B."/>
            <person name="Miller N."/>
            <person name="Greco T."/>
            <person name="Kemp K."/>
            <person name="Kramer J."/>
            <person name="Fulton L."/>
            <person name="Mardis E."/>
            <person name="Dante M."/>
            <person name="Pepin K."/>
            <person name="Hillier L.W."/>
            <person name="Nelson J."/>
            <person name="Spieth J."/>
            <person name="Ryan E."/>
            <person name="Andrews S."/>
            <person name="Geisel C."/>
            <person name="Layman D."/>
            <person name="Du H."/>
            <person name="Ali J."/>
            <person name="Berghoff A."/>
            <person name="Jones K."/>
            <person name="Drone K."/>
            <person name="Cotton M."/>
            <person name="Joshu C."/>
            <person name="Antonoiu B."/>
            <person name="Zidanic M."/>
            <person name="Strong C."/>
            <person name="Sun H."/>
            <person name="Lamar B."/>
            <person name="Yordan C."/>
            <person name="Ma P."/>
            <person name="Zhong J."/>
            <person name="Preston R."/>
            <person name="Vil D."/>
            <person name="Shekher M."/>
            <person name="Matero A."/>
            <person name="Shah R."/>
            <person name="Swaby I.K."/>
            <person name="O'Shaughnessy A."/>
            <person name="Rodriguez M."/>
            <person name="Hoffman J."/>
            <person name="Till S."/>
            <person name="Granat S."/>
            <person name="Shohdy N."/>
            <person name="Hasegawa A."/>
            <person name="Hameed A."/>
            <person name="Lodhi M."/>
            <person name="Johnson A."/>
            <person name="Chen E."/>
            <person name="Marra M.A."/>
            <person name="Martienssen R."/>
            <person name="McCombie W.R."/>
        </authorList>
    </citation>
    <scope>NUCLEOTIDE SEQUENCE [LARGE SCALE GENOMIC DNA]</scope>
    <source>
        <strain>cv. Columbia</strain>
    </source>
</reference>
<reference key="2">
    <citation type="journal article" date="2017" name="Plant J.">
        <title>Araport11: a complete reannotation of the Arabidopsis thaliana reference genome.</title>
        <authorList>
            <person name="Cheng C.Y."/>
            <person name="Krishnakumar V."/>
            <person name="Chan A.P."/>
            <person name="Thibaud-Nissen F."/>
            <person name="Schobel S."/>
            <person name="Town C.D."/>
        </authorList>
    </citation>
    <scope>GENOME REANNOTATION</scope>
    <source>
        <strain>cv. Columbia</strain>
    </source>
</reference>
<reference key="3">
    <citation type="journal article" date="2005" name="Plant Physiol.">
        <title>Genome organization of more than 300 defensin-like genes in Arabidopsis.</title>
        <authorList>
            <person name="Silverstein K.A.T."/>
            <person name="Graham M.A."/>
            <person name="Paape T.D."/>
            <person name="VandenBosch K.A."/>
        </authorList>
    </citation>
    <scope>GENE FAMILY</scope>
</reference>
<evidence type="ECO:0000250" key="1"/>
<evidence type="ECO:0000255" key="2"/>
<evidence type="ECO:0000305" key="3"/>
<name>DF312_ARATH</name>
<dbReference type="EMBL" id="AC006266">
    <property type="status" value="NOT_ANNOTATED_CDS"/>
    <property type="molecule type" value="Genomic_DNA"/>
</dbReference>
<dbReference type="EMBL" id="AF160183">
    <property type="status" value="NOT_ANNOTATED_CDS"/>
    <property type="molecule type" value="Genomic_DNA"/>
</dbReference>
<dbReference type="EMBL" id="AL117321">
    <property type="status" value="NOT_ANNOTATED_CDS"/>
    <property type="molecule type" value="Genomic_DNA"/>
</dbReference>
<dbReference type="EMBL" id="CP002687">
    <property type="protein sequence ID" value="AEE82592.1"/>
    <property type="molecule type" value="Genomic_DNA"/>
</dbReference>
<dbReference type="RefSeq" id="NP_001031592.1">
    <property type="nucleotide sequence ID" value="NM_001036515.1"/>
</dbReference>
<dbReference type="SMR" id="Q2V3K9"/>
<dbReference type="PaxDb" id="3702-AT4G08039.1"/>
<dbReference type="EnsemblPlants" id="AT4G08039.1">
    <property type="protein sequence ID" value="AT4G08039.1"/>
    <property type="gene ID" value="AT4G08039"/>
</dbReference>
<dbReference type="GeneID" id="3770167"/>
<dbReference type="Gramene" id="AT4G08039.1">
    <property type="protein sequence ID" value="AT4G08039.1"/>
    <property type="gene ID" value="AT4G08039"/>
</dbReference>
<dbReference type="KEGG" id="ath:AT4G08039"/>
<dbReference type="Araport" id="AT4G08039"/>
<dbReference type="TAIR" id="AT4G08039"/>
<dbReference type="HOGENOM" id="CLU_2779325_0_0_1"/>
<dbReference type="InParanoid" id="Q2V3K9"/>
<dbReference type="Proteomes" id="UP000006548">
    <property type="component" value="Chromosome 4"/>
</dbReference>
<dbReference type="ExpressionAtlas" id="Q2V3K9">
    <property type="expression patterns" value="baseline"/>
</dbReference>
<dbReference type="GO" id="GO:0005576">
    <property type="term" value="C:extracellular region"/>
    <property type="evidence" value="ECO:0007669"/>
    <property type="project" value="UniProtKB-SubCell"/>
</dbReference>
<dbReference type="GO" id="GO:0050832">
    <property type="term" value="P:defense response to fungus"/>
    <property type="evidence" value="ECO:0007669"/>
    <property type="project" value="UniProtKB-KW"/>
</dbReference>
<dbReference type="GO" id="GO:0031640">
    <property type="term" value="P:killing of cells of another organism"/>
    <property type="evidence" value="ECO:0007669"/>
    <property type="project" value="UniProtKB-KW"/>
</dbReference>
<proteinExistence type="uncertain"/>
<feature type="signal peptide" evidence="2">
    <location>
        <begin position="1"/>
        <end position="19"/>
    </location>
</feature>
<feature type="chain" id="PRO_0000379768" description="Putative defensin-like protein 312">
    <location>
        <begin position="20"/>
        <end position="69"/>
    </location>
</feature>
<feature type="disulfide bond" evidence="1">
    <location>
        <begin position="45"/>
        <end position="57"/>
    </location>
</feature>
<gene>
    <name type="ordered locus">At4g08039</name>
    <name type="ORF">F17A2</name>
    <name type="ORF">F1K3</name>
</gene>
<keyword id="KW-0929">Antimicrobial</keyword>
<keyword id="KW-1015">Disulfide bond</keyword>
<keyword id="KW-0295">Fungicide</keyword>
<keyword id="KW-0611">Plant defense</keyword>
<keyword id="KW-1185">Reference proteome</keyword>
<keyword id="KW-0964">Secreted</keyword>
<keyword id="KW-0732">Signal</keyword>
<comment type="subcellular location">
    <subcellularLocation>
        <location evidence="1">Secreted</location>
    </subcellularLocation>
</comment>
<comment type="similarity">
    <text evidence="3">Belongs to the DEFL family.</text>
</comment>
<comment type="caution">
    <text evidence="3">Could be the product of a pseudogene. Lacks 3 of the 4 disulfide bonds, which are conserved features of the family.</text>
</comment>
<sequence length="69" mass="8138">MSCFSFLVYFLLFIVTKMSQSPLSQSSHEFTVVSPYLSCFGIEECLFYLYFKLYDLCVILLCTWFDLSE</sequence>